<gene>
    <name evidence="1" type="primary">hisE</name>
    <name type="ordered locus">STER_1198</name>
</gene>
<reference key="1">
    <citation type="journal article" date="2006" name="Proc. Natl. Acad. Sci. U.S.A.">
        <title>Comparative genomics of the lactic acid bacteria.</title>
        <authorList>
            <person name="Makarova K.S."/>
            <person name="Slesarev A."/>
            <person name="Wolf Y.I."/>
            <person name="Sorokin A."/>
            <person name="Mirkin B."/>
            <person name="Koonin E.V."/>
            <person name="Pavlov A."/>
            <person name="Pavlova N."/>
            <person name="Karamychev V."/>
            <person name="Polouchine N."/>
            <person name="Shakhova V."/>
            <person name="Grigoriev I."/>
            <person name="Lou Y."/>
            <person name="Rohksar D."/>
            <person name="Lucas S."/>
            <person name="Huang K."/>
            <person name="Goodstein D.M."/>
            <person name="Hawkins T."/>
            <person name="Plengvidhya V."/>
            <person name="Welker D."/>
            <person name="Hughes J."/>
            <person name="Goh Y."/>
            <person name="Benson A."/>
            <person name="Baldwin K."/>
            <person name="Lee J.-H."/>
            <person name="Diaz-Muniz I."/>
            <person name="Dosti B."/>
            <person name="Smeianov V."/>
            <person name="Wechter W."/>
            <person name="Barabote R."/>
            <person name="Lorca G."/>
            <person name="Altermann E."/>
            <person name="Barrangou R."/>
            <person name="Ganesan B."/>
            <person name="Xie Y."/>
            <person name="Rawsthorne H."/>
            <person name="Tamir D."/>
            <person name="Parker C."/>
            <person name="Breidt F."/>
            <person name="Broadbent J.R."/>
            <person name="Hutkins R."/>
            <person name="O'Sullivan D."/>
            <person name="Steele J."/>
            <person name="Unlu G."/>
            <person name="Saier M.H. Jr."/>
            <person name="Klaenhammer T."/>
            <person name="Richardson P."/>
            <person name="Kozyavkin S."/>
            <person name="Weimer B.C."/>
            <person name="Mills D.A."/>
        </authorList>
    </citation>
    <scope>NUCLEOTIDE SEQUENCE [LARGE SCALE GENOMIC DNA]</scope>
    <source>
        <strain>ATCC BAA-491 / LMD-9</strain>
    </source>
</reference>
<comment type="catalytic activity">
    <reaction evidence="1">
        <text>1-(5-phospho-beta-D-ribosyl)-ATP + H2O = 1-(5-phospho-beta-D-ribosyl)-5'-AMP + diphosphate + H(+)</text>
        <dbReference type="Rhea" id="RHEA:22828"/>
        <dbReference type="ChEBI" id="CHEBI:15377"/>
        <dbReference type="ChEBI" id="CHEBI:15378"/>
        <dbReference type="ChEBI" id="CHEBI:33019"/>
        <dbReference type="ChEBI" id="CHEBI:59457"/>
        <dbReference type="ChEBI" id="CHEBI:73183"/>
        <dbReference type="EC" id="3.6.1.31"/>
    </reaction>
</comment>
<comment type="pathway">
    <text evidence="1">Amino-acid biosynthesis; L-histidine biosynthesis; L-histidine from 5-phospho-alpha-D-ribose 1-diphosphate: step 2/9.</text>
</comment>
<comment type="subcellular location">
    <subcellularLocation>
        <location evidence="1">Cytoplasm</location>
    </subcellularLocation>
</comment>
<comment type="similarity">
    <text evidence="1">Belongs to the PRA-PH family.</text>
</comment>
<protein>
    <recommendedName>
        <fullName evidence="1">Phosphoribosyl-ATP pyrophosphatase</fullName>
        <shortName evidence="1">PRA-PH</shortName>
        <ecNumber evidence="1">3.6.1.31</ecNumber>
    </recommendedName>
</protein>
<proteinExistence type="inferred from homology"/>
<name>HIS2_STRTD</name>
<accession>Q03K84</accession>
<keyword id="KW-0028">Amino-acid biosynthesis</keyword>
<keyword id="KW-0067">ATP-binding</keyword>
<keyword id="KW-0963">Cytoplasm</keyword>
<keyword id="KW-0368">Histidine biosynthesis</keyword>
<keyword id="KW-0378">Hydrolase</keyword>
<keyword id="KW-0547">Nucleotide-binding</keyword>
<feature type="chain" id="PRO_0000319668" description="Phosphoribosyl-ATP pyrophosphatase">
    <location>
        <begin position="1"/>
        <end position="104"/>
    </location>
</feature>
<sequence>MLETLYKEALDRKNNPKEGSYTNYLFDKGLDKILKKVGEEATEVVIGAKNADKTEIANETADVLYHLAVMLVETGVSPEDVEAVLRARQGKQSNVHDRKEVTDY</sequence>
<organism>
    <name type="scientific">Streptococcus thermophilus (strain ATCC BAA-491 / LMD-9)</name>
    <dbReference type="NCBI Taxonomy" id="322159"/>
    <lineage>
        <taxon>Bacteria</taxon>
        <taxon>Bacillati</taxon>
        <taxon>Bacillota</taxon>
        <taxon>Bacilli</taxon>
        <taxon>Lactobacillales</taxon>
        <taxon>Streptococcaceae</taxon>
        <taxon>Streptococcus</taxon>
    </lineage>
</organism>
<evidence type="ECO:0000255" key="1">
    <source>
        <dbReference type="HAMAP-Rule" id="MF_01020"/>
    </source>
</evidence>
<dbReference type="EC" id="3.6.1.31" evidence="1"/>
<dbReference type="EMBL" id="CP000419">
    <property type="protein sequence ID" value="ABJ66388.1"/>
    <property type="molecule type" value="Genomic_DNA"/>
</dbReference>
<dbReference type="RefSeq" id="WP_011681263.1">
    <property type="nucleotide sequence ID" value="NC_008532.1"/>
</dbReference>
<dbReference type="SMR" id="Q03K84"/>
<dbReference type="KEGG" id="ste:STER_1198"/>
<dbReference type="HOGENOM" id="CLU_123337_0_0_9"/>
<dbReference type="UniPathway" id="UPA00031">
    <property type="reaction ID" value="UER00007"/>
</dbReference>
<dbReference type="GO" id="GO:0005737">
    <property type="term" value="C:cytoplasm"/>
    <property type="evidence" value="ECO:0007669"/>
    <property type="project" value="UniProtKB-SubCell"/>
</dbReference>
<dbReference type="GO" id="GO:0005524">
    <property type="term" value="F:ATP binding"/>
    <property type="evidence" value="ECO:0007669"/>
    <property type="project" value="UniProtKB-KW"/>
</dbReference>
<dbReference type="GO" id="GO:0004636">
    <property type="term" value="F:phosphoribosyl-ATP diphosphatase activity"/>
    <property type="evidence" value="ECO:0007669"/>
    <property type="project" value="UniProtKB-UniRule"/>
</dbReference>
<dbReference type="GO" id="GO:0000105">
    <property type="term" value="P:L-histidine biosynthetic process"/>
    <property type="evidence" value="ECO:0007669"/>
    <property type="project" value="UniProtKB-UniRule"/>
</dbReference>
<dbReference type="CDD" id="cd11534">
    <property type="entry name" value="NTP-PPase_HisIE_like"/>
    <property type="match status" value="1"/>
</dbReference>
<dbReference type="Gene3D" id="1.10.287.1080">
    <property type="entry name" value="MazG-like"/>
    <property type="match status" value="1"/>
</dbReference>
<dbReference type="HAMAP" id="MF_01020">
    <property type="entry name" value="HisE"/>
    <property type="match status" value="1"/>
</dbReference>
<dbReference type="InterPro" id="IPR008179">
    <property type="entry name" value="HisE"/>
</dbReference>
<dbReference type="InterPro" id="IPR021130">
    <property type="entry name" value="PRib-ATP_PPHydrolase-like"/>
</dbReference>
<dbReference type="NCBIfam" id="TIGR03188">
    <property type="entry name" value="histidine_hisI"/>
    <property type="match status" value="1"/>
</dbReference>
<dbReference type="PANTHER" id="PTHR42945">
    <property type="entry name" value="HISTIDINE BIOSYNTHESIS BIFUNCTIONAL PROTEIN"/>
    <property type="match status" value="1"/>
</dbReference>
<dbReference type="PANTHER" id="PTHR42945:SF9">
    <property type="entry name" value="HISTIDINE BIOSYNTHESIS BIFUNCTIONAL PROTEIN HISIE"/>
    <property type="match status" value="1"/>
</dbReference>
<dbReference type="Pfam" id="PF01503">
    <property type="entry name" value="PRA-PH"/>
    <property type="match status" value="1"/>
</dbReference>
<dbReference type="SUPFAM" id="SSF101386">
    <property type="entry name" value="all-alpha NTP pyrophosphatases"/>
    <property type="match status" value="1"/>
</dbReference>